<accession>Q32N32</accession>
<accession>Q7T0X8</accession>
<keyword id="KW-0025">Alternative splicing</keyword>
<keyword id="KW-0175">Coiled coil</keyword>
<keyword id="KW-0472">Membrane</keyword>
<keyword id="KW-1185">Reference proteome</keyword>
<keyword id="KW-0735">Signal-anchor</keyword>
<keyword id="KW-0812">Transmembrane</keyword>
<keyword id="KW-1133">Transmembrane helix</keyword>
<name>GOLM2_XENLA</name>
<feature type="chain" id="PRO_0000291847" description="Protein GOLM2">
    <location>
        <begin position="1"/>
        <end position="385"/>
    </location>
</feature>
<feature type="topological domain" description="Cytoplasmic" evidence="1">
    <location>
        <begin position="1"/>
        <end position="12"/>
    </location>
</feature>
<feature type="transmembrane region" description="Helical; Signal-anchor for type II membrane protein" evidence="1">
    <location>
        <begin position="13"/>
        <end position="33"/>
    </location>
</feature>
<feature type="topological domain" description="Lumenal" evidence="1">
    <location>
        <begin position="34"/>
        <end position="385"/>
    </location>
</feature>
<feature type="region of interest" description="Disordered" evidence="2">
    <location>
        <begin position="169"/>
        <end position="385"/>
    </location>
</feature>
<feature type="coiled-coil region" evidence="1">
    <location>
        <begin position="44"/>
        <end position="193"/>
    </location>
</feature>
<feature type="compositionally biased region" description="Basic and acidic residues" evidence="2">
    <location>
        <begin position="170"/>
        <end position="193"/>
    </location>
</feature>
<feature type="compositionally biased region" description="Basic and acidic residues" evidence="2">
    <location>
        <begin position="211"/>
        <end position="220"/>
    </location>
</feature>
<feature type="compositionally biased region" description="Polar residues" evidence="2">
    <location>
        <begin position="265"/>
        <end position="283"/>
    </location>
</feature>
<feature type="compositionally biased region" description="Basic and acidic residues" evidence="2">
    <location>
        <begin position="285"/>
        <end position="299"/>
    </location>
</feature>
<feature type="compositionally biased region" description="Acidic residues" evidence="2">
    <location>
        <begin position="356"/>
        <end position="367"/>
    </location>
</feature>
<feature type="compositionally biased region" description="Basic and acidic residues" evidence="2">
    <location>
        <begin position="368"/>
        <end position="385"/>
    </location>
</feature>
<feature type="splice variant" id="VSP_026266" description="In isoform 2." evidence="3">
    <location>
        <begin position="335"/>
        <end position="363"/>
    </location>
</feature>
<feature type="sequence conflict" description="In Ref. 1; AAH55994." evidence="4" ref="1">
    <original>N</original>
    <variation>T</variation>
    <location>
        <position position="114"/>
    </location>
</feature>
<feature type="sequence conflict" description="In Ref. 1; AAH55994." evidence="4" ref="1">
    <original>T</original>
    <variation>S</variation>
    <location>
        <position position="181"/>
    </location>
</feature>
<feature type="sequence conflict" description="In Ref. 1; AAH55994." evidence="4" ref="1">
    <original>S</original>
    <variation>K</variation>
    <location>
        <position position="334"/>
    </location>
</feature>
<protein>
    <recommendedName>
        <fullName evidence="4">Protein GOLM2</fullName>
    </recommendedName>
    <alternativeName>
        <fullName>Cancer susceptibility candidate gene 4 protein homolog</fullName>
        <shortName>CASC4</shortName>
    </alternativeName>
    <alternativeName>
        <fullName evidence="4">Golgi membrane protein 2</fullName>
    </alternativeName>
</protein>
<evidence type="ECO:0000255" key="1"/>
<evidence type="ECO:0000256" key="2">
    <source>
        <dbReference type="SAM" id="MobiDB-lite"/>
    </source>
</evidence>
<evidence type="ECO:0000303" key="3">
    <source ref="1"/>
</evidence>
<evidence type="ECO:0000305" key="4"/>
<organism>
    <name type="scientific">Xenopus laevis</name>
    <name type="common">African clawed frog</name>
    <dbReference type="NCBI Taxonomy" id="8355"/>
    <lineage>
        <taxon>Eukaryota</taxon>
        <taxon>Metazoa</taxon>
        <taxon>Chordata</taxon>
        <taxon>Craniata</taxon>
        <taxon>Vertebrata</taxon>
        <taxon>Euteleostomi</taxon>
        <taxon>Amphibia</taxon>
        <taxon>Batrachia</taxon>
        <taxon>Anura</taxon>
        <taxon>Pipoidea</taxon>
        <taxon>Pipidae</taxon>
        <taxon>Xenopodinae</taxon>
        <taxon>Xenopus</taxon>
        <taxon>Xenopus</taxon>
    </lineage>
</organism>
<gene>
    <name type="primary">golm2</name>
    <name type="synonym">casc4</name>
</gene>
<proteinExistence type="evidence at transcript level"/>
<dbReference type="EMBL" id="BC055994">
    <property type="protein sequence ID" value="AAH55994.1"/>
    <property type="molecule type" value="mRNA"/>
</dbReference>
<dbReference type="EMBL" id="BC108864">
    <property type="protein sequence ID" value="AAI08865.1"/>
    <property type="molecule type" value="mRNA"/>
</dbReference>
<dbReference type="RefSeq" id="NP_001079843.1">
    <molecule id="Q32N32-1"/>
    <property type="nucleotide sequence ID" value="NM_001086374.1"/>
</dbReference>
<dbReference type="RefSeq" id="XP_018106143.1">
    <property type="nucleotide sequence ID" value="XM_018250654.1"/>
</dbReference>
<dbReference type="SMR" id="Q32N32"/>
<dbReference type="DNASU" id="379533"/>
<dbReference type="GeneID" id="379533"/>
<dbReference type="KEGG" id="xla:379533"/>
<dbReference type="AGR" id="Xenbase:XB-GENE-6255485"/>
<dbReference type="CTD" id="379533"/>
<dbReference type="Xenbase" id="XB-GENE-6255485">
    <property type="gene designation" value="golm2.L"/>
</dbReference>
<dbReference type="OrthoDB" id="10072022at2759"/>
<dbReference type="Proteomes" id="UP000186698">
    <property type="component" value="Chromosome 3L"/>
</dbReference>
<dbReference type="Bgee" id="379533">
    <property type="expression patterns" value="Expressed in internal ear and 19 other cell types or tissues"/>
</dbReference>
<dbReference type="GO" id="GO:0016020">
    <property type="term" value="C:membrane"/>
    <property type="evidence" value="ECO:0007669"/>
    <property type="project" value="UniProtKB-SubCell"/>
</dbReference>
<dbReference type="InterPro" id="IPR026139">
    <property type="entry name" value="GOLM1/CASC4"/>
</dbReference>
<dbReference type="PANTHER" id="PTHR15896">
    <property type="entry name" value="GOLGI PHOSPHOPROTEIN 2/GP73-RELATED"/>
    <property type="match status" value="1"/>
</dbReference>
<dbReference type="PANTHER" id="PTHR15896:SF7">
    <property type="entry name" value="PROTEIN GOLM2"/>
    <property type="match status" value="1"/>
</dbReference>
<dbReference type="PRINTS" id="PR02084">
    <property type="entry name" value="GOLM1CASC4"/>
</dbReference>
<comment type="subcellular location">
    <subcellularLocation>
        <location evidence="4">Membrane</location>
        <topology evidence="4">Single-pass type II membrane protein</topology>
    </subcellularLocation>
</comment>
<comment type="alternative products">
    <event type="alternative splicing"/>
    <isoform>
        <id>Q32N32-1</id>
        <name>1</name>
        <sequence type="displayed"/>
    </isoform>
    <isoform>
        <id>Q32N32-2</id>
        <name>2</name>
        <sequence type="described" ref="VSP_026266"/>
    </isoform>
</comment>
<comment type="similarity">
    <text evidence="4">Belongs to the GOLM family.</text>
</comment>
<reference key="1">
    <citation type="submission" date="2005-11" db="EMBL/GenBank/DDBJ databases">
        <authorList>
            <consortium name="NIH - Xenopus Gene Collection (XGC) project"/>
        </authorList>
    </citation>
    <scope>NUCLEOTIDE SEQUENCE [LARGE SCALE MRNA] (ISOFORMS 1 AND 2)</scope>
    <source>
        <tissue>Embryo</tissue>
        <tissue>Ovary</tissue>
    </source>
</reference>
<sequence length="385" mass="43974">MVGFGAPRRTGRLPPFVLVALLAVIGLLAFNYWSVSARQAALHDELLGLQAQVQRTEVARSRLEKRNSELMMQSDSHRRQIEQKQGEYQGLGERLQARDIQAQRCELDKSKLQNNVSLQMADISHLKEQLAELRHEFLRQEDQLHEYKNNNTFLQKSLQEESQQCAQQLAERKREYEENLTKQKEELDKQPQKDEEEGGTVDNKMHILPSEVKEKIEDPSSNRLPFAQDGIKLESDAGMPEIEDNEPAKEDSLQNDVKGQDTGALPSQSKSLLEKQPSLQPLSFTEHEVKKPLPDKKETVQIPEVEENALQLEPHPLKQMPRDSKTMSFNLKQSRFFDENESPVDPQHGSKVADYNGDDGNVEDDDHDGQADAGEYHKDHLNETL</sequence>